<organism>
    <name type="scientific">Sinorhizobium fredii (strain NBRC 101917 / NGR234)</name>
    <dbReference type="NCBI Taxonomy" id="394"/>
    <lineage>
        <taxon>Bacteria</taxon>
        <taxon>Pseudomonadati</taxon>
        <taxon>Pseudomonadota</taxon>
        <taxon>Alphaproteobacteria</taxon>
        <taxon>Hyphomicrobiales</taxon>
        <taxon>Rhizobiaceae</taxon>
        <taxon>Sinorhizobium/Ensifer group</taxon>
        <taxon>Sinorhizobium</taxon>
    </lineage>
</organism>
<feature type="chain" id="PRO_1000199220" description="Leucine--tRNA ligase">
    <location>
        <begin position="1"/>
        <end position="876"/>
    </location>
</feature>
<feature type="short sequence motif" description="'HIGH' region">
    <location>
        <begin position="43"/>
        <end position="53"/>
    </location>
</feature>
<feature type="short sequence motif" description="'KMSKS' region">
    <location>
        <begin position="632"/>
        <end position="636"/>
    </location>
</feature>
<feature type="binding site" evidence="1">
    <location>
        <position position="635"/>
    </location>
    <ligand>
        <name>ATP</name>
        <dbReference type="ChEBI" id="CHEBI:30616"/>
    </ligand>
</feature>
<comment type="catalytic activity">
    <reaction evidence="1">
        <text>tRNA(Leu) + L-leucine + ATP = L-leucyl-tRNA(Leu) + AMP + diphosphate</text>
        <dbReference type="Rhea" id="RHEA:11688"/>
        <dbReference type="Rhea" id="RHEA-COMP:9613"/>
        <dbReference type="Rhea" id="RHEA-COMP:9622"/>
        <dbReference type="ChEBI" id="CHEBI:30616"/>
        <dbReference type="ChEBI" id="CHEBI:33019"/>
        <dbReference type="ChEBI" id="CHEBI:57427"/>
        <dbReference type="ChEBI" id="CHEBI:78442"/>
        <dbReference type="ChEBI" id="CHEBI:78494"/>
        <dbReference type="ChEBI" id="CHEBI:456215"/>
        <dbReference type="EC" id="6.1.1.4"/>
    </reaction>
</comment>
<comment type="subcellular location">
    <subcellularLocation>
        <location evidence="1">Cytoplasm</location>
    </subcellularLocation>
</comment>
<comment type="similarity">
    <text evidence="1">Belongs to the class-I aminoacyl-tRNA synthetase family.</text>
</comment>
<accession>C3MB60</accession>
<proteinExistence type="inferred from homology"/>
<protein>
    <recommendedName>
        <fullName evidence="1">Leucine--tRNA ligase</fullName>
        <ecNumber evidence="1">6.1.1.4</ecNumber>
    </recommendedName>
    <alternativeName>
        <fullName evidence="1">Leucyl-tRNA synthetase</fullName>
        <shortName evidence="1">LeuRS</shortName>
    </alternativeName>
</protein>
<dbReference type="EC" id="6.1.1.4" evidence="1"/>
<dbReference type="EMBL" id="CP001389">
    <property type="protein sequence ID" value="ACP27069.1"/>
    <property type="molecule type" value="Genomic_DNA"/>
</dbReference>
<dbReference type="RefSeq" id="WP_012709816.1">
    <property type="nucleotide sequence ID" value="NC_012587.1"/>
</dbReference>
<dbReference type="RefSeq" id="YP_002827822.1">
    <property type="nucleotide sequence ID" value="NC_012587.1"/>
</dbReference>
<dbReference type="SMR" id="C3MB60"/>
<dbReference type="STRING" id="394.NGR_c33390"/>
<dbReference type="KEGG" id="rhi:NGR_c33390"/>
<dbReference type="PATRIC" id="fig|394.7.peg.6184"/>
<dbReference type="eggNOG" id="COG0495">
    <property type="taxonomic scope" value="Bacteria"/>
</dbReference>
<dbReference type="HOGENOM" id="CLU_004427_0_0_5"/>
<dbReference type="OrthoDB" id="9810365at2"/>
<dbReference type="Proteomes" id="UP000001054">
    <property type="component" value="Chromosome"/>
</dbReference>
<dbReference type="GO" id="GO:0005829">
    <property type="term" value="C:cytosol"/>
    <property type="evidence" value="ECO:0007669"/>
    <property type="project" value="TreeGrafter"/>
</dbReference>
<dbReference type="GO" id="GO:0002161">
    <property type="term" value="F:aminoacyl-tRNA deacylase activity"/>
    <property type="evidence" value="ECO:0007669"/>
    <property type="project" value="InterPro"/>
</dbReference>
<dbReference type="GO" id="GO:0005524">
    <property type="term" value="F:ATP binding"/>
    <property type="evidence" value="ECO:0007669"/>
    <property type="project" value="UniProtKB-UniRule"/>
</dbReference>
<dbReference type="GO" id="GO:0004823">
    <property type="term" value="F:leucine-tRNA ligase activity"/>
    <property type="evidence" value="ECO:0007669"/>
    <property type="project" value="UniProtKB-UniRule"/>
</dbReference>
<dbReference type="GO" id="GO:0006429">
    <property type="term" value="P:leucyl-tRNA aminoacylation"/>
    <property type="evidence" value="ECO:0007669"/>
    <property type="project" value="UniProtKB-UniRule"/>
</dbReference>
<dbReference type="CDD" id="cd07958">
    <property type="entry name" value="Anticodon_Ia_Leu_BEm"/>
    <property type="match status" value="1"/>
</dbReference>
<dbReference type="CDD" id="cd00812">
    <property type="entry name" value="LeuRS_core"/>
    <property type="match status" value="1"/>
</dbReference>
<dbReference type="FunFam" id="1.10.730.10:FF:000002">
    <property type="entry name" value="Leucine--tRNA ligase"/>
    <property type="match status" value="1"/>
</dbReference>
<dbReference type="FunFam" id="3.40.50.620:FF:000003">
    <property type="entry name" value="Leucine--tRNA ligase"/>
    <property type="match status" value="1"/>
</dbReference>
<dbReference type="FunFam" id="3.40.50.620:FF:000056">
    <property type="entry name" value="Leucine--tRNA ligase"/>
    <property type="match status" value="1"/>
</dbReference>
<dbReference type="Gene3D" id="2.20.28.290">
    <property type="match status" value="1"/>
</dbReference>
<dbReference type="Gene3D" id="3.10.20.590">
    <property type="match status" value="1"/>
</dbReference>
<dbReference type="Gene3D" id="3.40.50.620">
    <property type="entry name" value="HUPs"/>
    <property type="match status" value="2"/>
</dbReference>
<dbReference type="Gene3D" id="1.10.730.10">
    <property type="entry name" value="Isoleucyl-tRNA Synthetase, Domain 1"/>
    <property type="match status" value="2"/>
</dbReference>
<dbReference type="HAMAP" id="MF_00049_B">
    <property type="entry name" value="Leu_tRNA_synth_B"/>
    <property type="match status" value="1"/>
</dbReference>
<dbReference type="InterPro" id="IPR001412">
    <property type="entry name" value="aa-tRNA-synth_I_CS"/>
</dbReference>
<dbReference type="InterPro" id="IPR002300">
    <property type="entry name" value="aa-tRNA-synth_Ia"/>
</dbReference>
<dbReference type="InterPro" id="IPR002302">
    <property type="entry name" value="Leu-tRNA-ligase"/>
</dbReference>
<dbReference type="InterPro" id="IPR025709">
    <property type="entry name" value="Leu_tRNA-synth_edit"/>
</dbReference>
<dbReference type="InterPro" id="IPR013155">
    <property type="entry name" value="M/V/L/I-tRNA-synth_anticd-bd"/>
</dbReference>
<dbReference type="InterPro" id="IPR015413">
    <property type="entry name" value="Methionyl/Leucyl_tRNA_Synth"/>
</dbReference>
<dbReference type="InterPro" id="IPR014729">
    <property type="entry name" value="Rossmann-like_a/b/a_fold"/>
</dbReference>
<dbReference type="InterPro" id="IPR009080">
    <property type="entry name" value="tRNAsynth_Ia_anticodon-bd"/>
</dbReference>
<dbReference type="InterPro" id="IPR009008">
    <property type="entry name" value="Val/Leu/Ile-tRNA-synth_edit"/>
</dbReference>
<dbReference type="NCBIfam" id="TIGR00396">
    <property type="entry name" value="leuS_bact"/>
    <property type="match status" value="1"/>
</dbReference>
<dbReference type="PANTHER" id="PTHR43740:SF2">
    <property type="entry name" value="LEUCINE--TRNA LIGASE, MITOCHONDRIAL"/>
    <property type="match status" value="1"/>
</dbReference>
<dbReference type="PANTHER" id="PTHR43740">
    <property type="entry name" value="LEUCYL-TRNA SYNTHETASE"/>
    <property type="match status" value="1"/>
</dbReference>
<dbReference type="Pfam" id="PF08264">
    <property type="entry name" value="Anticodon_1"/>
    <property type="match status" value="1"/>
</dbReference>
<dbReference type="Pfam" id="PF00133">
    <property type="entry name" value="tRNA-synt_1"/>
    <property type="match status" value="2"/>
</dbReference>
<dbReference type="Pfam" id="PF13603">
    <property type="entry name" value="tRNA-synt_1_2"/>
    <property type="match status" value="1"/>
</dbReference>
<dbReference type="Pfam" id="PF09334">
    <property type="entry name" value="tRNA-synt_1g"/>
    <property type="match status" value="1"/>
</dbReference>
<dbReference type="PRINTS" id="PR00985">
    <property type="entry name" value="TRNASYNTHLEU"/>
</dbReference>
<dbReference type="SUPFAM" id="SSF47323">
    <property type="entry name" value="Anticodon-binding domain of a subclass of class I aminoacyl-tRNA synthetases"/>
    <property type="match status" value="1"/>
</dbReference>
<dbReference type="SUPFAM" id="SSF52374">
    <property type="entry name" value="Nucleotidylyl transferase"/>
    <property type="match status" value="1"/>
</dbReference>
<dbReference type="SUPFAM" id="SSF50677">
    <property type="entry name" value="ValRS/IleRS/LeuRS editing domain"/>
    <property type="match status" value="1"/>
</dbReference>
<dbReference type="PROSITE" id="PS00178">
    <property type="entry name" value="AA_TRNA_LIGASE_I"/>
    <property type="match status" value="1"/>
</dbReference>
<name>SYL_SINFN</name>
<sequence>MATERYNPRDTEPRWQQEWDARKVFETENDDPREKYYVLEMFPYPSGRIHMGHVRNYTMGDVVARYKRARGFNVLHPMGWDAFGMPAENAAMERGVHPAGWTYQNIAAMKAQLKVMGLSLDWSREFATCDPAYYQRQQYLFLDFLEKGLVYRRQSKVNWDPVDNTVLANEQVIDGRGWRSGALVEQRELTQWFFRITDFSQDLLDALDGLEQWPEKVRLMQKNWIGRSEGLALRWALDPATVPGETKELTVYTTRPDTLFGASFLAISADHPLAREAAAKDAAIDAFCEECRRAGTSLAALETAEKKGIDTGIRARHPFDPEWELPVYVANFVLMDYGTGAIFGCPSGDQRDLDFARKYGLSVVPVVMPKDADAATFTIEDEAYGGDGVMINSRFLDGLSTEEAFEAVASKLEQETLDGAPRAERKVNFRLRDWGISRQRYWGCPIPVIHCEDCGVVPVPKADLPVTLPPDVTFDKPGNPLDRHPTWRHVACPQCGKDARRETDTMDTFVDSSWYYARFTAPWEDKPTDPKAANHWLPVDQYIGGIEHAILHLLYSRFFTRAMKATGHVAMDEPFKGLFTQGMVVHETYSRGEGAQREWVTPAEIRIDEIDGRRRAVLIETGEEVAIGSIEKMSKSKKNVVDPDDIIGSYGADTARFFVLSDSPPDRDVIWSEAGVEGAHRFVQRVWRLVGEAAESLRGAKASPAKEGEGLAISQAAHRTLRAVEADYDKLAFNKAVARIYELVNVLAAPLTQVAAGKADQAVTAAVKDATTILIDLIAPMMPHLAEECWREIGGEGLIAERPWPTFDPALVVENEITLPVQINGKKRADLTIARDADQSAIESAVLALDAVKAALNGASPRKIIVVPQRIVNVVV</sequence>
<keyword id="KW-0030">Aminoacyl-tRNA synthetase</keyword>
<keyword id="KW-0067">ATP-binding</keyword>
<keyword id="KW-0963">Cytoplasm</keyword>
<keyword id="KW-0436">Ligase</keyword>
<keyword id="KW-0547">Nucleotide-binding</keyword>
<keyword id="KW-0648">Protein biosynthesis</keyword>
<keyword id="KW-1185">Reference proteome</keyword>
<evidence type="ECO:0000255" key="1">
    <source>
        <dbReference type="HAMAP-Rule" id="MF_00049"/>
    </source>
</evidence>
<gene>
    <name evidence="1" type="primary">leuS</name>
    <name type="ordered locus">NGR_c33390</name>
</gene>
<reference key="1">
    <citation type="journal article" date="2009" name="Appl. Environ. Microbiol.">
        <title>Rhizobium sp. strain NGR234 possesses a remarkable number of secretion systems.</title>
        <authorList>
            <person name="Schmeisser C."/>
            <person name="Liesegang H."/>
            <person name="Krysciak D."/>
            <person name="Bakkou N."/>
            <person name="Le Quere A."/>
            <person name="Wollherr A."/>
            <person name="Heinemeyer I."/>
            <person name="Morgenstern B."/>
            <person name="Pommerening-Roeser A."/>
            <person name="Flores M."/>
            <person name="Palacios R."/>
            <person name="Brenner S."/>
            <person name="Gottschalk G."/>
            <person name="Schmitz R.A."/>
            <person name="Broughton W.J."/>
            <person name="Perret X."/>
            <person name="Strittmatter A.W."/>
            <person name="Streit W.R."/>
        </authorList>
    </citation>
    <scope>NUCLEOTIDE SEQUENCE [LARGE SCALE GENOMIC DNA]</scope>
    <source>
        <strain>NBRC 101917 / NGR234</strain>
    </source>
</reference>